<feature type="chain" id="PRO_0000212422" description="Pre-mRNA-splicing factor slt11">
    <location>
        <begin position="1"/>
        <end position="383"/>
    </location>
</feature>
<feature type="domain" description="RRM" evidence="2">
    <location>
        <begin position="242"/>
        <end position="315"/>
    </location>
</feature>
<feature type="region of interest" description="Disordered" evidence="3">
    <location>
        <begin position="148"/>
        <end position="228"/>
    </location>
</feature>
<feature type="region of interest" description="Disordered" evidence="3">
    <location>
        <begin position="330"/>
        <end position="383"/>
    </location>
</feature>
<feature type="compositionally biased region" description="Gly residues" evidence="3">
    <location>
        <begin position="206"/>
        <end position="216"/>
    </location>
</feature>
<organism>
    <name type="scientific">Aspergillus fumigatus (strain ATCC MYA-4609 / CBS 101355 / FGSC A1100 / Af293)</name>
    <name type="common">Neosartorya fumigata</name>
    <dbReference type="NCBI Taxonomy" id="330879"/>
    <lineage>
        <taxon>Eukaryota</taxon>
        <taxon>Fungi</taxon>
        <taxon>Dikarya</taxon>
        <taxon>Ascomycota</taxon>
        <taxon>Pezizomycotina</taxon>
        <taxon>Eurotiomycetes</taxon>
        <taxon>Eurotiomycetidae</taxon>
        <taxon>Eurotiales</taxon>
        <taxon>Aspergillaceae</taxon>
        <taxon>Aspergillus</taxon>
        <taxon>Aspergillus subgen. Fumigati</taxon>
    </lineage>
</organism>
<gene>
    <name type="primary">slt11</name>
    <name type="ORF">AFUA_4G03640</name>
</gene>
<evidence type="ECO:0000250" key="1"/>
<evidence type="ECO:0000255" key="2">
    <source>
        <dbReference type="PROSITE-ProRule" id="PRU00176"/>
    </source>
</evidence>
<evidence type="ECO:0000256" key="3">
    <source>
        <dbReference type="SAM" id="MobiDB-lite"/>
    </source>
</evidence>
<evidence type="ECO:0000305" key="4"/>
<dbReference type="EMBL" id="AAHF01000016">
    <property type="protein sequence ID" value="EAL84513.1"/>
    <property type="molecule type" value="Genomic_DNA"/>
</dbReference>
<dbReference type="RefSeq" id="XP_746551.1">
    <property type="nucleotide sequence ID" value="XM_741458.1"/>
</dbReference>
<dbReference type="SMR" id="Q4W9V0"/>
<dbReference type="FunCoup" id="Q4W9V0">
    <property type="interactions" value="125"/>
</dbReference>
<dbReference type="STRING" id="330879.Q4W9V0"/>
<dbReference type="EnsemblFungi" id="EAL84513">
    <property type="protein sequence ID" value="EAL84513"/>
    <property type="gene ID" value="AFUA_4G03640"/>
</dbReference>
<dbReference type="GeneID" id="3504017"/>
<dbReference type="KEGG" id="afm:AFUA_4G03640"/>
<dbReference type="VEuPathDB" id="FungiDB:Afu4g03640"/>
<dbReference type="eggNOG" id="KOG0153">
    <property type="taxonomic scope" value="Eukaryota"/>
</dbReference>
<dbReference type="HOGENOM" id="CLU_027112_1_0_1"/>
<dbReference type="InParanoid" id="Q4W9V0"/>
<dbReference type="OMA" id="CPLRVQW"/>
<dbReference type="OrthoDB" id="10259600at2759"/>
<dbReference type="Proteomes" id="UP000002530">
    <property type="component" value="Chromosome 4"/>
</dbReference>
<dbReference type="GO" id="GO:0071014">
    <property type="term" value="C:post-mRNA release spliceosomal complex"/>
    <property type="evidence" value="ECO:0007669"/>
    <property type="project" value="EnsemblFungi"/>
</dbReference>
<dbReference type="GO" id="GO:0000974">
    <property type="term" value="C:Prp19 complex"/>
    <property type="evidence" value="ECO:0000318"/>
    <property type="project" value="GO_Central"/>
</dbReference>
<dbReference type="GO" id="GO:0071006">
    <property type="term" value="C:U2-type catalytic step 1 spliceosome"/>
    <property type="evidence" value="ECO:0000318"/>
    <property type="project" value="GO_Central"/>
</dbReference>
<dbReference type="GO" id="GO:0071007">
    <property type="term" value="C:U2-type catalytic step 2 spliceosome"/>
    <property type="evidence" value="ECO:0000318"/>
    <property type="project" value="GO_Central"/>
</dbReference>
<dbReference type="GO" id="GO:0036002">
    <property type="term" value="F:pre-mRNA binding"/>
    <property type="evidence" value="ECO:0000318"/>
    <property type="project" value="GO_Central"/>
</dbReference>
<dbReference type="GO" id="GO:0017070">
    <property type="term" value="F:U6 snRNA binding"/>
    <property type="evidence" value="ECO:0000318"/>
    <property type="project" value="GO_Central"/>
</dbReference>
<dbReference type="GO" id="GO:0006397">
    <property type="term" value="P:mRNA processing"/>
    <property type="evidence" value="ECO:0007669"/>
    <property type="project" value="UniProtKB-KW"/>
</dbReference>
<dbReference type="GO" id="GO:0008380">
    <property type="term" value="P:RNA splicing"/>
    <property type="evidence" value="ECO:0007669"/>
    <property type="project" value="UniProtKB-KW"/>
</dbReference>
<dbReference type="CDD" id="cd12265">
    <property type="entry name" value="RRM_SLT11"/>
    <property type="match status" value="1"/>
</dbReference>
<dbReference type="FunFam" id="3.30.70.330:FF:000396">
    <property type="entry name" value="Putative Pre-mRNA-splicing factor slt11"/>
    <property type="match status" value="1"/>
</dbReference>
<dbReference type="Gene3D" id="3.30.70.330">
    <property type="match status" value="1"/>
</dbReference>
<dbReference type="InterPro" id="IPR039171">
    <property type="entry name" value="Cwc2/Slt11"/>
</dbReference>
<dbReference type="InterPro" id="IPR012677">
    <property type="entry name" value="Nucleotide-bd_a/b_plait_sf"/>
</dbReference>
<dbReference type="InterPro" id="IPR035979">
    <property type="entry name" value="RBD_domain_sf"/>
</dbReference>
<dbReference type="InterPro" id="IPR000504">
    <property type="entry name" value="RRM_dom"/>
</dbReference>
<dbReference type="InterPro" id="IPR034356">
    <property type="entry name" value="Slt11_RRM"/>
</dbReference>
<dbReference type="InterPro" id="IPR048995">
    <property type="entry name" value="STL11/RBM22-like_N"/>
</dbReference>
<dbReference type="PANTHER" id="PTHR14089">
    <property type="entry name" value="PRE-MRNA-SPLICING FACTOR RBM22"/>
    <property type="match status" value="1"/>
</dbReference>
<dbReference type="PANTHER" id="PTHR14089:SF6">
    <property type="entry name" value="PRE-MRNA-SPLICING FACTOR RBM22"/>
    <property type="match status" value="1"/>
</dbReference>
<dbReference type="Pfam" id="PF00076">
    <property type="entry name" value="RRM_1"/>
    <property type="match status" value="1"/>
</dbReference>
<dbReference type="Pfam" id="PF21369">
    <property type="entry name" value="STL11_N"/>
    <property type="match status" value="1"/>
</dbReference>
<dbReference type="SMART" id="SM00360">
    <property type="entry name" value="RRM"/>
    <property type="match status" value="1"/>
</dbReference>
<dbReference type="SUPFAM" id="SSF54928">
    <property type="entry name" value="RNA-binding domain, RBD"/>
    <property type="match status" value="1"/>
</dbReference>
<dbReference type="PROSITE" id="PS50102">
    <property type="entry name" value="RRM"/>
    <property type="match status" value="1"/>
</dbReference>
<accession>Q4W9V0</accession>
<comment type="function">
    <text evidence="1">Involved in pre-mRNA splicing. Facilitates the cooperative formation of U2/U6 helix II in association with stem II in the spliceosome. Binds to RNA (By similarity).</text>
</comment>
<comment type="subunit">
    <text evidence="1">Associated with the spliceosome.</text>
</comment>
<comment type="subcellular location">
    <subcellularLocation>
        <location evidence="1">Nucleus</location>
    </subcellularLocation>
</comment>
<comment type="similarity">
    <text evidence="4">Belongs to the SLT11 family.</text>
</comment>
<sequence>MPPPQIKQDLNRSGWESTDFPSVCENCLPDNPYVQMLKEDYGAECKICTRPFTIFRWKADRTARTKRTTICLTCARLKNCCQCCMLDLSFGLPIVVRDAALKMVAPGPESSINREYYAQEHEKEIQEGRGAVEAYEKTDEKARELLRRLANSEPYYRKPRQQLEGPSDDSTEAQPTDAPVVQSRYGNGPGPIRTSESRRGTPLPGRGRGNMRGGRAGRPFPGTAQIPPSPEDYLPPADPNIMSLFVTGVEDDLPEHTLRTFFTQFGQLRSLICSHRAHCAFINFATREGAEAAAQHCKGKAVIQGCPLRVRWGKPKPLDNMDREERMKNAREGRLTVQAQKDGESGQRAITAAGEPATEKPQSFVVAPPPGSGDVQYSSLSGD</sequence>
<keyword id="KW-0507">mRNA processing</keyword>
<keyword id="KW-0508">mRNA splicing</keyword>
<keyword id="KW-0539">Nucleus</keyword>
<keyword id="KW-1185">Reference proteome</keyword>
<keyword id="KW-0694">RNA-binding</keyword>
<keyword id="KW-0747">Spliceosome</keyword>
<protein>
    <recommendedName>
        <fullName>Pre-mRNA-splicing factor slt11</fullName>
    </recommendedName>
</protein>
<proteinExistence type="inferred from homology"/>
<name>SLT11_ASPFU</name>
<reference key="1">
    <citation type="journal article" date="2005" name="Nature">
        <title>Genomic sequence of the pathogenic and allergenic filamentous fungus Aspergillus fumigatus.</title>
        <authorList>
            <person name="Nierman W.C."/>
            <person name="Pain A."/>
            <person name="Anderson M.J."/>
            <person name="Wortman J.R."/>
            <person name="Kim H.S."/>
            <person name="Arroyo J."/>
            <person name="Berriman M."/>
            <person name="Abe K."/>
            <person name="Archer D.B."/>
            <person name="Bermejo C."/>
            <person name="Bennett J.W."/>
            <person name="Bowyer P."/>
            <person name="Chen D."/>
            <person name="Collins M."/>
            <person name="Coulsen R."/>
            <person name="Davies R."/>
            <person name="Dyer P.S."/>
            <person name="Farman M.L."/>
            <person name="Fedorova N."/>
            <person name="Fedorova N.D."/>
            <person name="Feldblyum T.V."/>
            <person name="Fischer R."/>
            <person name="Fosker N."/>
            <person name="Fraser A."/>
            <person name="Garcia J.L."/>
            <person name="Garcia M.J."/>
            <person name="Goble A."/>
            <person name="Goldman G.H."/>
            <person name="Gomi K."/>
            <person name="Griffith-Jones S."/>
            <person name="Gwilliam R."/>
            <person name="Haas B.J."/>
            <person name="Haas H."/>
            <person name="Harris D.E."/>
            <person name="Horiuchi H."/>
            <person name="Huang J."/>
            <person name="Humphray S."/>
            <person name="Jimenez J."/>
            <person name="Keller N."/>
            <person name="Khouri H."/>
            <person name="Kitamoto K."/>
            <person name="Kobayashi T."/>
            <person name="Konzack S."/>
            <person name="Kulkarni R."/>
            <person name="Kumagai T."/>
            <person name="Lafton A."/>
            <person name="Latge J.-P."/>
            <person name="Li W."/>
            <person name="Lord A."/>
            <person name="Lu C."/>
            <person name="Majoros W.H."/>
            <person name="May G.S."/>
            <person name="Miller B.L."/>
            <person name="Mohamoud Y."/>
            <person name="Molina M."/>
            <person name="Monod M."/>
            <person name="Mouyna I."/>
            <person name="Mulligan S."/>
            <person name="Murphy L.D."/>
            <person name="O'Neil S."/>
            <person name="Paulsen I."/>
            <person name="Penalva M.A."/>
            <person name="Pertea M."/>
            <person name="Price C."/>
            <person name="Pritchard B.L."/>
            <person name="Quail M.A."/>
            <person name="Rabbinowitsch E."/>
            <person name="Rawlins N."/>
            <person name="Rajandream M.A."/>
            <person name="Reichard U."/>
            <person name="Renauld H."/>
            <person name="Robson G.D."/>
            <person name="Rodriguez de Cordoba S."/>
            <person name="Rodriguez-Pena J.M."/>
            <person name="Ronning C.M."/>
            <person name="Rutter S."/>
            <person name="Salzberg S.L."/>
            <person name="Sanchez M."/>
            <person name="Sanchez-Ferrero J.C."/>
            <person name="Saunders D."/>
            <person name="Seeger K."/>
            <person name="Squares R."/>
            <person name="Squares S."/>
            <person name="Takeuchi M."/>
            <person name="Tekaia F."/>
            <person name="Turner G."/>
            <person name="Vazquez de Aldana C.R."/>
            <person name="Weidman J."/>
            <person name="White O."/>
            <person name="Woodward J.R."/>
            <person name="Yu J.-H."/>
            <person name="Fraser C.M."/>
            <person name="Galagan J.E."/>
            <person name="Asai K."/>
            <person name="Machida M."/>
            <person name="Hall N."/>
            <person name="Barrell B.G."/>
            <person name="Denning D.W."/>
        </authorList>
    </citation>
    <scope>NUCLEOTIDE SEQUENCE [LARGE SCALE GENOMIC DNA]</scope>
    <source>
        <strain>ATCC MYA-4609 / CBS 101355 / FGSC A1100 / Af293</strain>
    </source>
</reference>